<evidence type="ECO:0000255" key="1">
    <source>
        <dbReference type="HAMAP-Rule" id="MF_01365"/>
    </source>
</evidence>
<evidence type="ECO:0000305" key="2"/>
<reference key="1">
    <citation type="journal article" date="2009" name="BMC Genomics">
        <title>Genome evolution driven by host adaptations results in a more virulent and antimicrobial-resistant Streptococcus pneumoniae serotype 14.</title>
        <authorList>
            <person name="Ding F."/>
            <person name="Tang P."/>
            <person name="Hsu M.-H."/>
            <person name="Cui P."/>
            <person name="Hu S."/>
            <person name="Yu J."/>
            <person name="Chiu C.-H."/>
        </authorList>
    </citation>
    <scope>NUCLEOTIDE SEQUENCE [LARGE SCALE GENOMIC DNA]</scope>
    <source>
        <strain>CGSP14</strain>
    </source>
</reference>
<name>RL6_STRPS</name>
<organism>
    <name type="scientific">Streptococcus pneumoniae (strain CGSP14)</name>
    <dbReference type="NCBI Taxonomy" id="516950"/>
    <lineage>
        <taxon>Bacteria</taxon>
        <taxon>Bacillati</taxon>
        <taxon>Bacillota</taxon>
        <taxon>Bacilli</taxon>
        <taxon>Lactobacillales</taxon>
        <taxon>Streptococcaceae</taxon>
        <taxon>Streptococcus</taxon>
    </lineage>
</organism>
<accession>B2IS55</accession>
<gene>
    <name evidence="1" type="primary">rplF</name>
    <name type="ordered locus">SPCG_0233</name>
</gene>
<keyword id="KW-0687">Ribonucleoprotein</keyword>
<keyword id="KW-0689">Ribosomal protein</keyword>
<keyword id="KW-0694">RNA-binding</keyword>
<keyword id="KW-0699">rRNA-binding</keyword>
<proteinExistence type="inferred from homology"/>
<sequence length="178" mass="19427">MSRIGNKVIVLPAGVELANNDNVVTVKGPKGELTREFSKDIEIRVEGTEVTLHRPNDSKEMKTIHGTTRALLNNMVVGVSEGFKKELEMRGVGYRAQLQGSKLVLAVGKSHPDEVEAPEGITFELPNPTTIVVSGISKEVVGQTAAYVRSLRSPEPYKGKGIRYVGEFVRRKEGKTGK</sequence>
<comment type="function">
    <text evidence="1">This protein binds to the 23S rRNA, and is important in its secondary structure. It is located near the subunit interface in the base of the L7/L12 stalk, and near the tRNA binding site of the peptidyltransferase center.</text>
</comment>
<comment type="subunit">
    <text evidence="1">Part of the 50S ribosomal subunit.</text>
</comment>
<comment type="similarity">
    <text evidence="1">Belongs to the universal ribosomal protein uL6 family.</text>
</comment>
<feature type="chain" id="PRO_1000144057" description="Large ribosomal subunit protein uL6">
    <location>
        <begin position="1"/>
        <end position="178"/>
    </location>
</feature>
<dbReference type="EMBL" id="CP001033">
    <property type="protein sequence ID" value="ACB89485.1"/>
    <property type="molecule type" value="Genomic_DNA"/>
</dbReference>
<dbReference type="RefSeq" id="WP_000086633.1">
    <property type="nucleotide sequence ID" value="NC_010582.1"/>
</dbReference>
<dbReference type="SMR" id="B2IS55"/>
<dbReference type="KEGG" id="spw:SPCG_0233"/>
<dbReference type="HOGENOM" id="CLU_065464_1_2_9"/>
<dbReference type="GO" id="GO:0022625">
    <property type="term" value="C:cytosolic large ribosomal subunit"/>
    <property type="evidence" value="ECO:0007669"/>
    <property type="project" value="TreeGrafter"/>
</dbReference>
<dbReference type="GO" id="GO:0019843">
    <property type="term" value="F:rRNA binding"/>
    <property type="evidence" value="ECO:0007669"/>
    <property type="project" value="UniProtKB-UniRule"/>
</dbReference>
<dbReference type="GO" id="GO:0003735">
    <property type="term" value="F:structural constituent of ribosome"/>
    <property type="evidence" value="ECO:0007669"/>
    <property type="project" value="InterPro"/>
</dbReference>
<dbReference type="GO" id="GO:0002181">
    <property type="term" value="P:cytoplasmic translation"/>
    <property type="evidence" value="ECO:0007669"/>
    <property type="project" value="TreeGrafter"/>
</dbReference>
<dbReference type="FunFam" id="3.90.930.12:FF:000001">
    <property type="entry name" value="50S ribosomal protein L6"/>
    <property type="match status" value="1"/>
</dbReference>
<dbReference type="FunFam" id="3.90.930.12:FF:000002">
    <property type="entry name" value="50S ribosomal protein L6"/>
    <property type="match status" value="1"/>
</dbReference>
<dbReference type="Gene3D" id="3.90.930.12">
    <property type="entry name" value="Ribosomal protein L6, alpha-beta domain"/>
    <property type="match status" value="2"/>
</dbReference>
<dbReference type="HAMAP" id="MF_01365_B">
    <property type="entry name" value="Ribosomal_uL6_B"/>
    <property type="match status" value="1"/>
</dbReference>
<dbReference type="InterPro" id="IPR000702">
    <property type="entry name" value="Ribosomal_uL6-like"/>
</dbReference>
<dbReference type="InterPro" id="IPR036789">
    <property type="entry name" value="Ribosomal_uL6-like_a/b-dom_sf"/>
</dbReference>
<dbReference type="InterPro" id="IPR020040">
    <property type="entry name" value="Ribosomal_uL6_a/b-dom"/>
</dbReference>
<dbReference type="InterPro" id="IPR019906">
    <property type="entry name" value="Ribosomal_uL6_bac-type"/>
</dbReference>
<dbReference type="InterPro" id="IPR002358">
    <property type="entry name" value="Ribosomal_uL6_CS"/>
</dbReference>
<dbReference type="NCBIfam" id="TIGR03654">
    <property type="entry name" value="L6_bact"/>
    <property type="match status" value="1"/>
</dbReference>
<dbReference type="PANTHER" id="PTHR11655">
    <property type="entry name" value="60S/50S RIBOSOMAL PROTEIN L6/L9"/>
    <property type="match status" value="1"/>
</dbReference>
<dbReference type="PANTHER" id="PTHR11655:SF14">
    <property type="entry name" value="LARGE RIBOSOMAL SUBUNIT PROTEIN UL6M"/>
    <property type="match status" value="1"/>
</dbReference>
<dbReference type="Pfam" id="PF00347">
    <property type="entry name" value="Ribosomal_L6"/>
    <property type="match status" value="2"/>
</dbReference>
<dbReference type="PIRSF" id="PIRSF002162">
    <property type="entry name" value="Ribosomal_L6"/>
    <property type="match status" value="1"/>
</dbReference>
<dbReference type="PRINTS" id="PR00059">
    <property type="entry name" value="RIBOSOMALL6"/>
</dbReference>
<dbReference type="SUPFAM" id="SSF56053">
    <property type="entry name" value="Ribosomal protein L6"/>
    <property type="match status" value="2"/>
</dbReference>
<dbReference type="PROSITE" id="PS00525">
    <property type="entry name" value="RIBOSOMAL_L6_1"/>
    <property type="match status" value="1"/>
</dbReference>
<protein>
    <recommendedName>
        <fullName evidence="1">Large ribosomal subunit protein uL6</fullName>
    </recommendedName>
    <alternativeName>
        <fullName evidence="2">50S ribosomal protein L6</fullName>
    </alternativeName>
</protein>